<name>VWA1_HUMAN</name>
<feature type="signal peptide" evidence="2">
    <location>
        <begin position="1"/>
        <end position="22"/>
    </location>
</feature>
<feature type="chain" id="PRO_0000307156" description="von Willebrand factor A domain-containing protein 1">
    <location>
        <begin position="23"/>
        <end position="445"/>
    </location>
</feature>
<feature type="domain" description="VWFA" evidence="3">
    <location>
        <begin position="34"/>
        <end position="213"/>
    </location>
</feature>
<feature type="domain" description="Fibronectin type-III 1" evidence="4">
    <location>
        <begin position="214"/>
        <end position="304"/>
    </location>
</feature>
<feature type="domain" description="Fibronectin type-III 2" evidence="4">
    <location>
        <begin position="334"/>
        <end position="427"/>
    </location>
</feature>
<feature type="region of interest" description="Disordered" evidence="5">
    <location>
        <begin position="302"/>
        <end position="325"/>
    </location>
</feature>
<feature type="region of interest" description="Disordered" evidence="5">
    <location>
        <begin position="411"/>
        <end position="445"/>
    </location>
</feature>
<feature type="compositionally biased region" description="Low complexity" evidence="5">
    <location>
        <begin position="311"/>
        <end position="325"/>
    </location>
</feature>
<feature type="modified residue" description="Phosphoserine; by FAM20C" evidence="6">
    <location>
        <position position="74"/>
    </location>
</feature>
<feature type="modified residue" description="Phosphoserine; by FAM20C" evidence="6">
    <location>
        <position position="80"/>
    </location>
</feature>
<feature type="modified residue" description="Phosphotyrosine" evidence="6">
    <location>
        <position position="83"/>
    </location>
</feature>
<feature type="modified residue" description="Phosphoserine; by FAM20C" evidence="6">
    <location>
        <position position="93"/>
    </location>
</feature>
<feature type="glycosylation site" description="N-linked (GlcNAc...) asparagine" evidence="2">
    <location>
        <position position="264"/>
    </location>
</feature>
<feature type="splice variant" id="VSP_028617" description="In isoform 2." evidence="9">
    <location>
        <begin position="1"/>
        <end position="212"/>
    </location>
</feature>
<feature type="splice variant" id="VSP_046651" description="In isoform 3." evidence="10">
    <original>PPASAPRGDLMFLLDSSASVSHYEFSRVREFVGQLVAPL</original>
    <variation>AQGPGRHRVHCQHRPRQLPGAVSRCLSPCREAPALCGRG</variation>
    <location>
        <begin position="26"/>
        <end position="64"/>
    </location>
</feature>
<feature type="splice variant" id="VSP_046652" description="In isoform 3." evidence="10">
    <location>
        <begin position="65"/>
        <end position="445"/>
    </location>
</feature>
<feature type="sequence variant" id="VAR_085457" description="In HMNR7." evidence="7">
    <location>
        <begin position="32"/>
        <end position="445"/>
    </location>
</feature>
<feature type="sequence variant" id="VAR_085458" description="In HMNR7; uncertain significance." evidence="7">
    <location>
        <begin position="63"/>
        <end position="70"/>
    </location>
</feature>
<feature type="sequence conflict" description="In Ref. 1; BAF84246." evidence="10" ref="1">
    <original>L</original>
    <variation>Q</variation>
    <location>
        <position position="9"/>
    </location>
</feature>
<protein>
    <recommendedName>
        <fullName evidence="10">von Willebrand factor A domain-containing protein 1</fullName>
    </recommendedName>
</protein>
<gene>
    <name evidence="12" type="primary">VWA1</name>
</gene>
<evidence type="ECO:0000250" key="1">
    <source>
        <dbReference type="UniProtKB" id="Q8R2Z5"/>
    </source>
</evidence>
<evidence type="ECO:0000255" key="2"/>
<evidence type="ECO:0000255" key="3">
    <source>
        <dbReference type="PROSITE-ProRule" id="PRU00219"/>
    </source>
</evidence>
<evidence type="ECO:0000255" key="4">
    <source>
        <dbReference type="PROSITE-ProRule" id="PRU00316"/>
    </source>
</evidence>
<evidence type="ECO:0000256" key="5">
    <source>
        <dbReference type="SAM" id="MobiDB-lite"/>
    </source>
</evidence>
<evidence type="ECO:0000269" key="6">
    <source>
    </source>
</evidence>
<evidence type="ECO:0000269" key="7">
    <source>
    </source>
</evidence>
<evidence type="ECO:0000269" key="8">
    <source>
    </source>
</evidence>
<evidence type="ECO:0000303" key="9">
    <source>
    </source>
</evidence>
<evidence type="ECO:0000305" key="10"/>
<evidence type="ECO:0000305" key="11">
    <source>
    </source>
</evidence>
<evidence type="ECO:0000312" key="12">
    <source>
        <dbReference type="HGNC" id="HGNC:30910"/>
    </source>
</evidence>
<proteinExistence type="evidence at protein level"/>
<dbReference type="EMBL" id="AK025868">
    <property type="protein sequence ID" value="BAB15264.1"/>
    <property type="molecule type" value="mRNA"/>
</dbReference>
<dbReference type="EMBL" id="AK096773">
    <property type="protein sequence ID" value="BAG53363.1"/>
    <property type="molecule type" value="mRNA"/>
</dbReference>
<dbReference type="EMBL" id="AK291557">
    <property type="protein sequence ID" value="BAF84246.1"/>
    <property type="molecule type" value="mRNA"/>
</dbReference>
<dbReference type="EMBL" id="AL391244">
    <property type="status" value="NOT_ANNOTATED_CDS"/>
    <property type="molecule type" value="Genomic_DNA"/>
</dbReference>
<dbReference type="EMBL" id="CH471183">
    <property type="protein sequence ID" value="EAW56197.1"/>
    <property type="molecule type" value="Genomic_DNA"/>
</dbReference>
<dbReference type="EMBL" id="CH471183">
    <property type="protein sequence ID" value="EAW56198.1"/>
    <property type="molecule type" value="Genomic_DNA"/>
</dbReference>
<dbReference type="EMBL" id="BC003543">
    <property type="protein sequence ID" value="AAH03543.2"/>
    <property type="molecule type" value="mRNA"/>
</dbReference>
<dbReference type="EMBL" id="BC059409">
    <property type="protein sequence ID" value="AAH59409.1"/>
    <property type="molecule type" value="mRNA"/>
</dbReference>
<dbReference type="CCDS" id="CCDS27.1">
    <molecule id="Q6PCB0-1"/>
</dbReference>
<dbReference type="CCDS" id="CCDS28.2">
    <molecule id="Q6PCB0-3"/>
</dbReference>
<dbReference type="RefSeq" id="NP_073745.2">
    <molecule id="Q6PCB0-1"/>
    <property type="nucleotide sequence ID" value="NM_022834.4"/>
</dbReference>
<dbReference type="RefSeq" id="NP_954572.2">
    <molecule id="Q6PCB0-3"/>
    <property type="nucleotide sequence ID" value="NM_199121.3"/>
</dbReference>
<dbReference type="SMR" id="Q6PCB0"/>
<dbReference type="BioGRID" id="122329">
    <property type="interactions" value="28"/>
</dbReference>
<dbReference type="FunCoup" id="Q6PCB0">
    <property type="interactions" value="302"/>
</dbReference>
<dbReference type="IntAct" id="Q6PCB0">
    <property type="interactions" value="23"/>
</dbReference>
<dbReference type="STRING" id="9606.ENSP00000417185"/>
<dbReference type="GlyCosmos" id="Q6PCB0">
    <property type="glycosylation" value="3 sites, 2 glycans"/>
</dbReference>
<dbReference type="GlyGen" id="Q6PCB0">
    <property type="glycosylation" value="12 sites, 24 N-linked glycans (1 site), 3 O-linked glycans (10 sites)"/>
</dbReference>
<dbReference type="iPTMnet" id="Q6PCB0"/>
<dbReference type="PhosphoSitePlus" id="Q6PCB0"/>
<dbReference type="BioMuta" id="VWA1"/>
<dbReference type="DMDM" id="74749155"/>
<dbReference type="jPOST" id="Q6PCB0"/>
<dbReference type="MassIVE" id="Q6PCB0"/>
<dbReference type="PaxDb" id="9606-ENSP00000417185"/>
<dbReference type="PeptideAtlas" id="Q6PCB0"/>
<dbReference type="ProteomicsDB" id="67054">
    <molecule id="Q6PCB0-1"/>
</dbReference>
<dbReference type="ProteomicsDB" id="67055">
    <molecule id="Q6PCB0-2"/>
</dbReference>
<dbReference type="Antibodypedia" id="26362">
    <property type="antibodies" value="74 antibodies from 22 providers"/>
</dbReference>
<dbReference type="DNASU" id="64856"/>
<dbReference type="Ensembl" id="ENST00000338660.5">
    <molecule id="Q6PCB0-3"/>
    <property type="protein sequence ID" value="ENSP00000423404.1"/>
    <property type="gene ID" value="ENSG00000179403.12"/>
</dbReference>
<dbReference type="Ensembl" id="ENST00000476993.2">
    <molecule id="Q6PCB0-1"/>
    <property type="protein sequence ID" value="ENSP00000417185.1"/>
    <property type="gene ID" value="ENSG00000179403.12"/>
</dbReference>
<dbReference type="GeneID" id="64856"/>
<dbReference type="KEGG" id="hsa:64856"/>
<dbReference type="MANE-Select" id="ENST00000476993.2">
    <property type="protein sequence ID" value="ENSP00000417185.1"/>
    <property type="RefSeq nucleotide sequence ID" value="NM_022834.5"/>
    <property type="RefSeq protein sequence ID" value="NP_073745.2"/>
</dbReference>
<dbReference type="UCSC" id="uc001afr.4">
    <molecule id="Q6PCB0-1"/>
    <property type="organism name" value="human"/>
</dbReference>
<dbReference type="AGR" id="HGNC:30910"/>
<dbReference type="CTD" id="64856"/>
<dbReference type="DisGeNET" id="64856"/>
<dbReference type="GeneCards" id="VWA1"/>
<dbReference type="HGNC" id="HGNC:30910">
    <property type="gene designation" value="VWA1"/>
</dbReference>
<dbReference type="HPA" id="ENSG00000179403">
    <property type="expression patterns" value="Tissue enhanced (seminal)"/>
</dbReference>
<dbReference type="MalaCards" id="VWA1"/>
<dbReference type="MIM" id="611901">
    <property type="type" value="gene"/>
</dbReference>
<dbReference type="MIM" id="619216">
    <property type="type" value="phenotype"/>
</dbReference>
<dbReference type="neXtProt" id="NX_Q6PCB0"/>
<dbReference type="OpenTargets" id="ENSG00000179403"/>
<dbReference type="Orphanet" id="314485">
    <property type="disease" value="Young adult-onset distal hereditary motor neuropathy"/>
</dbReference>
<dbReference type="PharmGKB" id="PA142670612"/>
<dbReference type="VEuPathDB" id="HostDB:ENSG00000179403"/>
<dbReference type="eggNOG" id="KOG1217">
    <property type="taxonomic scope" value="Eukaryota"/>
</dbReference>
<dbReference type="eggNOG" id="KOG3544">
    <property type="taxonomic scope" value="Eukaryota"/>
</dbReference>
<dbReference type="GeneTree" id="ENSGT00940000160734"/>
<dbReference type="HOGENOM" id="CLU_2867092_0_0_1"/>
<dbReference type="InParanoid" id="Q6PCB0"/>
<dbReference type="OMA" id="WMLMCLL"/>
<dbReference type="OrthoDB" id="9949424at2759"/>
<dbReference type="PAN-GO" id="Q6PCB0">
    <property type="GO annotations" value="1 GO annotation based on evolutionary models"/>
</dbReference>
<dbReference type="PhylomeDB" id="Q6PCB0"/>
<dbReference type="TreeFam" id="TF316402"/>
<dbReference type="PathwayCommons" id="Q6PCB0"/>
<dbReference type="Reactome" id="R-HSA-381426">
    <property type="pathway name" value="Regulation of Insulin-like Growth Factor (IGF) transport and uptake by Insulin-like Growth Factor Binding Proteins (IGFBPs)"/>
</dbReference>
<dbReference type="Reactome" id="R-HSA-8957275">
    <property type="pathway name" value="Post-translational protein phosphorylation"/>
</dbReference>
<dbReference type="SignaLink" id="Q6PCB0"/>
<dbReference type="BioGRID-ORCS" id="64856">
    <property type="hits" value="25 hits in 1147 CRISPR screens"/>
</dbReference>
<dbReference type="ChiTaRS" id="VWA1">
    <property type="organism name" value="human"/>
</dbReference>
<dbReference type="GenomeRNAi" id="64856"/>
<dbReference type="Pharos" id="Q6PCB0">
    <property type="development level" value="Tbio"/>
</dbReference>
<dbReference type="PRO" id="PR:Q6PCB0"/>
<dbReference type="Proteomes" id="UP000005640">
    <property type="component" value="Chromosome 1"/>
</dbReference>
<dbReference type="RNAct" id="Q6PCB0">
    <property type="molecule type" value="protein"/>
</dbReference>
<dbReference type="Bgee" id="ENSG00000179403">
    <property type="expression patterns" value="Expressed in tibial nerve and 164 other cell types or tissues"/>
</dbReference>
<dbReference type="ExpressionAtlas" id="Q6PCB0">
    <property type="expression patterns" value="baseline and differential"/>
</dbReference>
<dbReference type="GO" id="GO:0005604">
    <property type="term" value="C:basement membrane"/>
    <property type="evidence" value="ECO:0007669"/>
    <property type="project" value="UniProtKB-SubCell"/>
</dbReference>
<dbReference type="GO" id="GO:0062023">
    <property type="term" value="C:collagen-containing extracellular matrix"/>
    <property type="evidence" value="ECO:0007005"/>
    <property type="project" value="BHF-UCL"/>
</dbReference>
<dbReference type="GO" id="GO:0005788">
    <property type="term" value="C:endoplasmic reticulum lumen"/>
    <property type="evidence" value="ECO:0000304"/>
    <property type="project" value="Reactome"/>
</dbReference>
<dbReference type="GO" id="GO:0070062">
    <property type="term" value="C:extracellular exosome"/>
    <property type="evidence" value="ECO:0007005"/>
    <property type="project" value="UniProtKB"/>
</dbReference>
<dbReference type="GO" id="GO:0005615">
    <property type="term" value="C:extracellular space"/>
    <property type="evidence" value="ECO:0007005"/>
    <property type="project" value="UniProtKB"/>
</dbReference>
<dbReference type="GO" id="GO:0005614">
    <property type="term" value="C:interstitial matrix"/>
    <property type="evidence" value="ECO:0007669"/>
    <property type="project" value="Ensembl"/>
</dbReference>
<dbReference type="GO" id="GO:0050436">
    <property type="term" value="F:microfibril binding"/>
    <property type="evidence" value="ECO:0007669"/>
    <property type="project" value="Ensembl"/>
</dbReference>
<dbReference type="GO" id="GO:0042803">
    <property type="term" value="F:protein homodimerization activity"/>
    <property type="evidence" value="ECO:0007669"/>
    <property type="project" value="Ensembl"/>
</dbReference>
<dbReference type="GO" id="GO:0048266">
    <property type="term" value="P:behavioral response to pain"/>
    <property type="evidence" value="ECO:0007669"/>
    <property type="project" value="Ensembl"/>
</dbReference>
<dbReference type="GO" id="GO:0030198">
    <property type="term" value="P:extracellular matrix organization"/>
    <property type="evidence" value="ECO:0007669"/>
    <property type="project" value="Ensembl"/>
</dbReference>
<dbReference type="GO" id="GO:0051260">
    <property type="term" value="P:protein homooligomerization"/>
    <property type="evidence" value="ECO:0007669"/>
    <property type="project" value="Ensembl"/>
</dbReference>
<dbReference type="CDD" id="cd00063">
    <property type="entry name" value="FN3"/>
    <property type="match status" value="2"/>
</dbReference>
<dbReference type="FunFam" id="2.60.40.10:FF:001442">
    <property type="entry name" value="von Willebrand factor A domain containing 1"/>
    <property type="match status" value="1"/>
</dbReference>
<dbReference type="FunFam" id="2.60.40.10:FF:000638">
    <property type="entry name" value="von Willebrand factor A domain-containing 1"/>
    <property type="match status" value="1"/>
</dbReference>
<dbReference type="FunFam" id="3.40.50.410:FF:000046">
    <property type="entry name" value="von Willebrand factor A domain-containing protein 1"/>
    <property type="match status" value="1"/>
</dbReference>
<dbReference type="Gene3D" id="2.60.40.10">
    <property type="entry name" value="Immunoglobulins"/>
    <property type="match status" value="2"/>
</dbReference>
<dbReference type="Gene3D" id="3.40.50.410">
    <property type="entry name" value="von Willebrand factor, type A domain"/>
    <property type="match status" value="1"/>
</dbReference>
<dbReference type="InterPro" id="IPR050525">
    <property type="entry name" value="ECM_Assembly_Org"/>
</dbReference>
<dbReference type="InterPro" id="IPR003961">
    <property type="entry name" value="FN3_dom"/>
</dbReference>
<dbReference type="InterPro" id="IPR036116">
    <property type="entry name" value="FN3_sf"/>
</dbReference>
<dbReference type="InterPro" id="IPR013783">
    <property type="entry name" value="Ig-like_fold"/>
</dbReference>
<dbReference type="InterPro" id="IPR002035">
    <property type="entry name" value="VWF_A"/>
</dbReference>
<dbReference type="InterPro" id="IPR036465">
    <property type="entry name" value="vWFA_dom_sf"/>
</dbReference>
<dbReference type="PANTHER" id="PTHR24020">
    <property type="entry name" value="COLLAGEN ALPHA"/>
    <property type="match status" value="1"/>
</dbReference>
<dbReference type="PANTHER" id="PTHR24020:SF77">
    <property type="entry name" value="VON WILLEBRAND FACTOR A DOMAIN-CONTAINING PROTEIN 1"/>
    <property type="match status" value="1"/>
</dbReference>
<dbReference type="Pfam" id="PF00041">
    <property type="entry name" value="fn3"/>
    <property type="match status" value="1"/>
</dbReference>
<dbReference type="Pfam" id="PF00092">
    <property type="entry name" value="VWA"/>
    <property type="match status" value="1"/>
</dbReference>
<dbReference type="PRINTS" id="PR00453">
    <property type="entry name" value="VWFADOMAIN"/>
</dbReference>
<dbReference type="SMART" id="SM00060">
    <property type="entry name" value="FN3"/>
    <property type="match status" value="2"/>
</dbReference>
<dbReference type="SMART" id="SM00327">
    <property type="entry name" value="VWA"/>
    <property type="match status" value="1"/>
</dbReference>
<dbReference type="SUPFAM" id="SSF49265">
    <property type="entry name" value="Fibronectin type III"/>
    <property type="match status" value="2"/>
</dbReference>
<dbReference type="SUPFAM" id="SSF53300">
    <property type="entry name" value="vWA-like"/>
    <property type="match status" value="1"/>
</dbReference>
<dbReference type="PROSITE" id="PS50853">
    <property type="entry name" value="FN3"/>
    <property type="match status" value="2"/>
</dbReference>
<dbReference type="PROSITE" id="PS50234">
    <property type="entry name" value="VWFA"/>
    <property type="match status" value="1"/>
</dbReference>
<reference key="1">
    <citation type="journal article" date="2004" name="Nat. Genet.">
        <title>Complete sequencing and characterization of 21,243 full-length human cDNAs.</title>
        <authorList>
            <person name="Ota T."/>
            <person name="Suzuki Y."/>
            <person name="Nishikawa T."/>
            <person name="Otsuki T."/>
            <person name="Sugiyama T."/>
            <person name="Irie R."/>
            <person name="Wakamatsu A."/>
            <person name="Hayashi K."/>
            <person name="Sato H."/>
            <person name="Nagai K."/>
            <person name="Kimura K."/>
            <person name="Makita H."/>
            <person name="Sekine M."/>
            <person name="Obayashi M."/>
            <person name="Nishi T."/>
            <person name="Shibahara T."/>
            <person name="Tanaka T."/>
            <person name="Ishii S."/>
            <person name="Yamamoto J."/>
            <person name="Saito K."/>
            <person name="Kawai Y."/>
            <person name="Isono Y."/>
            <person name="Nakamura Y."/>
            <person name="Nagahari K."/>
            <person name="Murakami K."/>
            <person name="Yasuda T."/>
            <person name="Iwayanagi T."/>
            <person name="Wagatsuma M."/>
            <person name="Shiratori A."/>
            <person name="Sudo H."/>
            <person name="Hosoiri T."/>
            <person name="Kaku Y."/>
            <person name="Kodaira H."/>
            <person name="Kondo H."/>
            <person name="Sugawara M."/>
            <person name="Takahashi M."/>
            <person name="Kanda K."/>
            <person name="Yokoi T."/>
            <person name="Furuya T."/>
            <person name="Kikkawa E."/>
            <person name="Omura Y."/>
            <person name="Abe K."/>
            <person name="Kamihara K."/>
            <person name="Katsuta N."/>
            <person name="Sato K."/>
            <person name="Tanikawa M."/>
            <person name="Yamazaki M."/>
            <person name="Ninomiya K."/>
            <person name="Ishibashi T."/>
            <person name="Yamashita H."/>
            <person name="Murakawa K."/>
            <person name="Fujimori K."/>
            <person name="Tanai H."/>
            <person name="Kimata M."/>
            <person name="Watanabe M."/>
            <person name="Hiraoka S."/>
            <person name="Chiba Y."/>
            <person name="Ishida S."/>
            <person name="Ono Y."/>
            <person name="Takiguchi S."/>
            <person name="Watanabe S."/>
            <person name="Yosida M."/>
            <person name="Hotuta T."/>
            <person name="Kusano J."/>
            <person name="Kanehori K."/>
            <person name="Takahashi-Fujii A."/>
            <person name="Hara H."/>
            <person name="Tanase T.-O."/>
            <person name="Nomura Y."/>
            <person name="Togiya S."/>
            <person name="Komai F."/>
            <person name="Hara R."/>
            <person name="Takeuchi K."/>
            <person name="Arita M."/>
            <person name="Imose N."/>
            <person name="Musashino K."/>
            <person name="Yuuki H."/>
            <person name="Oshima A."/>
            <person name="Sasaki N."/>
            <person name="Aotsuka S."/>
            <person name="Yoshikawa Y."/>
            <person name="Matsunawa H."/>
            <person name="Ichihara T."/>
            <person name="Shiohata N."/>
            <person name="Sano S."/>
            <person name="Moriya S."/>
            <person name="Momiyama H."/>
            <person name="Satoh N."/>
            <person name="Takami S."/>
            <person name="Terashima Y."/>
            <person name="Suzuki O."/>
            <person name="Nakagawa S."/>
            <person name="Senoh A."/>
            <person name="Mizoguchi H."/>
            <person name="Goto Y."/>
            <person name="Shimizu F."/>
            <person name="Wakebe H."/>
            <person name="Hishigaki H."/>
            <person name="Watanabe T."/>
            <person name="Sugiyama A."/>
            <person name="Takemoto M."/>
            <person name="Kawakami B."/>
            <person name="Yamazaki M."/>
            <person name="Watanabe K."/>
            <person name="Kumagai A."/>
            <person name="Itakura S."/>
            <person name="Fukuzumi Y."/>
            <person name="Fujimori Y."/>
            <person name="Komiyama M."/>
            <person name="Tashiro H."/>
            <person name="Tanigami A."/>
            <person name="Fujiwara T."/>
            <person name="Ono T."/>
            <person name="Yamada K."/>
            <person name="Fujii Y."/>
            <person name="Ozaki K."/>
            <person name="Hirao M."/>
            <person name="Ohmori Y."/>
            <person name="Kawabata A."/>
            <person name="Hikiji T."/>
            <person name="Kobatake N."/>
            <person name="Inagaki H."/>
            <person name="Ikema Y."/>
            <person name="Okamoto S."/>
            <person name="Okitani R."/>
            <person name="Kawakami T."/>
            <person name="Noguchi S."/>
            <person name="Itoh T."/>
            <person name="Shigeta K."/>
            <person name="Senba T."/>
            <person name="Matsumura K."/>
            <person name="Nakajima Y."/>
            <person name="Mizuno T."/>
            <person name="Morinaga M."/>
            <person name="Sasaki M."/>
            <person name="Togashi T."/>
            <person name="Oyama M."/>
            <person name="Hata H."/>
            <person name="Watanabe M."/>
            <person name="Komatsu T."/>
            <person name="Mizushima-Sugano J."/>
            <person name="Satoh T."/>
            <person name="Shirai Y."/>
            <person name="Takahashi Y."/>
            <person name="Nakagawa K."/>
            <person name="Okumura K."/>
            <person name="Nagase T."/>
            <person name="Nomura N."/>
            <person name="Kikuchi H."/>
            <person name="Masuho Y."/>
            <person name="Yamashita R."/>
            <person name="Nakai K."/>
            <person name="Yada T."/>
            <person name="Nakamura Y."/>
            <person name="Ohara O."/>
            <person name="Isogai T."/>
            <person name="Sugano S."/>
        </authorList>
    </citation>
    <scope>NUCLEOTIDE SEQUENCE [LARGE SCALE MRNA] (ISOFORMS 1 AND 2)</scope>
    <source>
        <tissue>Placenta</tissue>
        <tissue>Prostate</tissue>
    </source>
</reference>
<reference key="2">
    <citation type="journal article" date="2006" name="Nature">
        <title>The DNA sequence and biological annotation of human chromosome 1.</title>
        <authorList>
            <person name="Gregory S.G."/>
            <person name="Barlow K.F."/>
            <person name="McLay K.E."/>
            <person name="Kaul R."/>
            <person name="Swarbreck D."/>
            <person name="Dunham A."/>
            <person name="Scott C.E."/>
            <person name="Howe K.L."/>
            <person name="Woodfine K."/>
            <person name="Spencer C.C.A."/>
            <person name="Jones M.C."/>
            <person name="Gillson C."/>
            <person name="Searle S."/>
            <person name="Zhou Y."/>
            <person name="Kokocinski F."/>
            <person name="McDonald L."/>
            <person name="Evans R."/>
            <person name="Phillips K."/>
            <person name="Atkinson A."/>
            <person name="Cooper R."/>
            <person name="Jones C."/>
            <person name="Hall R.E."/>
            <person name="Andrews T.D."/>
            <person name="Lloyd C."/>
            <person name="Ainscough R."/>
            <person name="Almeida J.P."/>
            <person name="Ambrose K.D."/>
            <person name="Anderson F."/>
            <person name="Andrew R.W."/>
            <person name="Ashwell R.I.S."/>
            <person name="Aubin K."/>
            <person name="Babbage A.K."/>
            <person name="Bagguley C.L."/>
            <person name="Bailey J."/>
            <person name="Beasley H."/>
            <person name="Bethel G."/>
            <person name="Bird C.P."/>
            <person name="Bray-Allen S."/>
            <person name="Brown J.Y."/>
            <person name="Brown A.J."/>
            <person name="Buckley D."/>
            <person name="Burton J."/>
            <person name="Bye J."/>
            <person name="Carder C."/>
            <person name="Chapman J.C."/>
            <person name="Clark S.Y."/>
            <person name="Clarke G."/>
            <person name="Clee C."/>
            <person name="Cobley V."/>
            <person name="Collier R.E."/>
            <person name="Corby N."/>
            <person name="Coville G.J."/>
            <person name="Davies J."/>
            <person name="Deadman R."/>
            <person name="Dunn M."/>
            <person name="Earthrowl M."/>
            <person name="Ellington A.G."/>
            <person name="Errington H."/>
            <person name="Frankish A."/>
            <person name="Frankland J."/>
            <person name="French L."/>
            <person name="Garner P."/>
            <person name="Garnett J."/>
            <person name="Gay L."/>
            <person name="Ghori M.R.J."/>
            <person name="Gibson R."/>
            <person name="Gilby L.M."/>
            <person name="Gillett W."/>
            <person name="Glithero R.J."/>
            <person name="Grafham D.V."/>
            <person name="Griffiths C."/>
            <person name="Griffiths-Jones S."/>
            <person name="Grocock R."/>
            <person name="Hammond S."/>
            <person name="Harrison E.S.I."/>
            <person name="Hart E."/>
            <person name="Haugen E."/>
            <person name="Heath P.D."/>
            <person name="Holmes S."/>
            <person name="Holt K."/>
            <person name="Howden P.J."/>
            <person name="Hunt A.R."/>
            <person name="Hunt S.E."/>
            <person name="Hunter G."/>
            <person name="Isherwood J."/>
            <person name="James R."/>
            <person name="Johnson C."/>
            <person name="Johnson D."/>
            <person name="Joy A."/>
            <person name="Kay M."/>
            <person name="Kershaw J.K."/>
            <person name="Kibukawa M."/>
            <person name="Kimberley A.M."/>
            <person name="King A."/>
            <person name="Knights A.J."/>
            <person name="Lad H."/>
            <person name="Laird G."/>
            <person name="Lawlor S."/>
            <person name="Leongamornlert D.A."/>
            <person name="Lloyd D.M."/>
            <person name="Loveland J."/>
            <person name="Lovell J."/>
            <person name="Lush M.J."/>
            <person name="Lyne R."/>
            <person name="Martin S."/>
            <person name="Mashreghi-Mohammadi M."/>
            <person name="Matthews L."/>
            <person name="Matthews N.S.W."/>
            <person name="McLaren S."/>
            <person name="Milne S."/>
            <person name="Mistry S."/>
            <person name="Moore M.J.F."/>
            <person name="Nickerson T."/>
            <person name="O'Dell C.N."/>
            <person name="Oliver K."/>
            <person name="Palmeiri A."/>
            <person name="Palmer S.A."/>
            <person name="Parker A."/>
            <person name="Patel D."/>
            <person name="Pearce A.V."/>
            <person name="Peck A.I."/>
            <person name="Pelan S."/>
            <person name="Phelps K."/>
            <person name="Phillimore B.J."/>
            <person name="Plumb R."/>
            <person name="Rajan J."/>
            <person name="Raymond C."/>
            <person name="Rouse G."/>
            <person name="Saenphimmachak C."/>
            <person name="Sehra H.K."/>
            <person name="Sheridan E."/>
            <person name="Shownkeen R."/>
            <person name="Sims S."/>
            <person name="Skuce C.D."/>
            <person name="Smith M."/>
            <person name="Steward C."/>
            <person name="Subramanian S."/>
            <person name="Sycamore N."/>
            <person name="Tracey A."/>
            <person name="Tromans A."/>
            <person name="Van Helmond Z."/>
            <person name="Wall M."/>
            <person name="Wallis J.M."/>
            <person name="White S."/>
            <person name="Whitehead S.L."/>
            <person name="Wilkinson J.E."/>
            <person name="Willey D.L."/>
            <person name="Williams H."/>
            <person name="Wilming L."/>
            <person name="Wray P.W."/>
            <person name="Wu Z."/>
            <person name="Coulson A."/>
            <person name="Vaudin M."/>
            <person name="Sulston J.E."/>
            <person name="Durbin R.M."/>
            <person name="Hubbard T."/>
            <person name="Wooster R."/>
            <person name="Dunham I."/>
            <person name="Carter N.P."/>
            <person name="McVean G."/>
            <person name="Ross M.T."/>
            <person name="Harrow J."/>
            <person name="Olson M.V."/>
            <person name="Beck S."/>
            <person name="Rogers J."/>
            <person name="Bentley D.R."/>
        </authorList>
    </citation>
    <scope>NUCLEOTIDE SEQUENCE [LARGE SCALE GENOMIC DNA]</scope>
</reference>
<reference key="3">
    <citation type="submission" date="2005-07" db="EMBL/GenBank/DDBJ databases">
        <authorList>
            <person name="Mural R.J."/>
            <person name="Istrail S."/>
            <person name="Sutton G.G."/>
            <person name="Florea L."/>
            <person name="Halpern A.L."/>
            <person name="Mobarry C.M."/>
            <person name="Lippert R."/>
            <person name="Walenz B."/>
            <person name="Shatkay H."/>
            <person name="Dew I."/>
            <person name="Miller J.R."/>
            <person name="Flanigan M.J."/>
            <person name="Edwards N.J."/>
            <person name="Bolanos R."/>
            <person name="Fasulo D."/>
            <person name="Halldorsson B.V."/>
            <person name="Hannenhalli S."/>
            <person name="Turner R."/>
            <person name="Yooseph S."/>
            <person name="Lu F."/>
            <person name="Nusskern D.R."/>
            <person name="Shue B.C."/>
            <person name="Zheng X.H."/>
            <person name="Zhong F."/>
            <person name="Delcher A.L."/>
            <person name="Huson D.H."/>
            <person name="Kravitz S.A."/>
            <person name="Mouchard L."/>
            <person name="Reinert K."/>
            <person name="Remington K.A."/>
            <person name="Clark A.G."/>
            <person name="Waterman M.S."/>
            <person name="Eichler E.E."/>
            <person name="Adams M.D."/>
            <person name="Hunkapiller M.W."/>
            <person name="Myers E.W."/>
            <person name="Venter J.C."/>
        </authorList>
    </citation>
    <scope>NUCLEOTIDE SEQUENCE [LARGE SCALE GENOMIC DNA]</scope>
</reference>
<reference key="4">
    <citation type="journal article" date="2004" name="Genome Res.">
        <title>The status, quality, and expansion of the NIH full-length cDNA project: the Mammalian Gene Collection (MGC).</title>
        <authorList>
            <consortium name="The MGC Project Team"/>
        </authorList>
    </citation>
    <scope>NUCLEOTIDE SEQUENCE [LARGE SCALE MRNA] (ISOFORM 1)</scope>
    <source>
        <tissue>Pancreas</tissue>
        <tissue>Placenta</tissue>
    </source>
</reference>
<reference key="5">
    <citation type="journal article" date="2015" name="Cell">
        <title>A single kinase generates the majority of the secreted phosphoproteome.</title>
        <authorList>
            <person name="Tagliabracci V.S."/>
            <person name="Wiley S.E."/>
            <person name="Guo X."/>
            <person name="Kinch L.N."/>
            <person name="Durrant E."/>
            <person name="Wen J."/>
            <person name="Xiao J."/>
            <person name="Cui J."/>
            <person name="Nguyen K.B."/>
            <person name="Engel J.L."/>
            <person name="Coon J.J."/>
            <person name="Grishin N."/>
            <person name="Pinna L.A."/>
            <person name="Pagliarini D.J."/>
            <person name="Dixon J.E."/>
        </authorList>
    </citation>
    <scope>PHOSPHORYLATION AT SER-74; SER-80; TYR-83 AND SER-93</scope>
</reference>
<reference key="6">
    <citation type="journal article" date="2021" name="Brain">
        <title>Bi-allelic truncating mutations in VWA1 cause neuromyopathy.</title>
        <authorList>
            <person name="Deschauer M."/>
            <person name="Hengel H."/>
            <person name="Rupprich K."/>
            <person name="Kreiss M."/>
            <person name="Schlotter-Weigel B."/>
            <person name="Grimmel M."/>
            <person name="Admard J."/>
            <person name="Schneider I."/>
            <person name="Alhaddad B."/>
            <person name="Gazou A."/>
            <person name="Sturm M."/>
            <person name="Vorgerd M."/>
            <person name="Balousha G."/>
            <person name="Balousha O."/>
            <person name="Falna M."/>
            <person name="Kirschke J.S."/>
            <person name="Kornblum C."/>
            <person name="Jordan B."/>
            <person name="Kraya T."/>
            <person name="Strom T.M."/>
            <person name="Weis J."/>
            <person name="Schoels L."/>
            <person name="Schara U."/>
            <person name="Zierz S."/>
            <person name="Riess O."/>
            <person name="Meitinger T."/>
            <person name="Haack T.B."/>
        </authorList>
    </citation>
    <scope>INVOLVEMENT IN HMNR7</scope>
    <scope>VARIANTS HMNR7 32-ARG--PRO-445 DEL AND 63-PRO--ALA-70 DEL</scope>
</reference>
<reference key="7">
    <citation type="journal article" date="2021" name="Brain">
        <title>An ancestral 10-bp repeat expansion in VWA1 causes recessive hereditary motor neuropathy.</title>
        <authorList>
            <consortium name="Genomics England Research Consortium"/>
            <person name="Pagnamenta A.T."/>
            <person name="Kaiyrzhanov R."/>
            <person name="Zou Y."/>
            <person name="Da'as S.I."/>
            <person name="Maroofian R."/>
            <person name="Donkervoort S."/>
            <person name="Dominik N."/>
            <person name="Lauffer M."/>
            <person name="Ferla M.P."/>
            <person name="Orioli A."/>
            <person name="Giess A."/>
            <person name="Tucci A."/>
            <person name="Beetz C."/>
            <person name="Sedghi M."/>
            <person name="Ansari B."/>
            <person name="Barresi R."/>
            <person name="Basiri K."/>
            <person name="Cortese A."/>
            <person name="Elgar G."/>
            <person name="Fernandez-Garcia M.A."/>
            <person name="Yip J."/>
            <person name="Foley A.R."/>
            <person name="Gutowski N."/>
            <person name="Jungbluth H."/>
            <person name="Lassche S."/>
            <person name="Lavin T."/>
            <person name="Marcelis C."/>
            <person name="Marks P."/>
            <person name="Marini-Bettolo C."/>
            <person name="Medne L."/>
            <person name="Moslemi A.R."/>
            <person name="Sarkozy A."/>
            <person name="Reilly M.M."/>
            <person name="Muntoni F."/>
            <person name="Millan F."/>
            <person name="Muraresku C.C."/>
            <person name="Need A.C."/>
            <person name="Nemeth A.H."/>
            <person name="Neuhaus S.B."/>
            <person name="Norwood F."/>
            <person name="O'Donnell M."/>
            <person name="O'Driscoll M."/>
            <person name="Rankin J."/>
            <person name="Yum S.W."/>
            <person name="Zolkipli-Cunningham Z."/>
            <person name="Brusius I."/>
            <person name="Wunderlich G."/>
            <person name="Karakaya M."/>
            <person name="Wirth B."/>
            <person name="Fakhro K.A."/>
            <person name="Tajsharghi H."/>
            <person name="Boennemann C.G."/>
            <person name="Taylor J.C."/>
            <person name="Houlden H."/>
        </authorList>
    </citation>
    <scope>INVOLVEMENT IN HMNR7</scope>
</reference>
<keyword id="KW-0025">Alternative splicing</keyword>
<keyword id="KW-0084">Basement membrane</keyword>
<keyword id="KW-0225">Disease variant</keyword>
<keyword id="KW-1015">Disulfide bond</keyword>
<keyword id="KW-0272">Extracellular matrix</keyword>
<keyword id="KW-0325">Glycoprotein</keyword>
<keyword id="KW-0622">Neuropathy</keyword>
<keyword id="KW-0597">Phosphoprotein</keyword>
<keyword id="KW-1267">Proteomics identification</keyword>
<keyword id="KW-1185">Reference proteome</keyword>
<keyword id="KW-0677">Repeat</keyword>
<keyword id="KW-0964">Secreted</keyword>
<keyword id="KW-0732">Signal</keyword>
<sequence length="445" mass="46804">MLPWTALGLALSLRLALARSGAERGPPASAPRGDLMFLLDSSASVSHYEFSRVREFVGQLVAPLPLGTGALRASLVHVGSRPYTEFPFGQHSSGEAAQDAVRASAQRMGDTHTGLALVYAKEQLFAEASGARPGVPKVLVWVTDGGSSDPVGPPMQELKDLGVTVFIVSTGRGNFLELSAAASAPAEKHLHFVDVDDLHIIVQELRGSILDAMRPQQLHATEITSSGFRLAWPPLLTADSGYYVLELVPSAQPGAARRQQLPGNATDWIWAGLDPDTDYDVALVPESNVRLLRPQILRVRTRPGEAGPGASGPESGAGPAPTQLAALPAPEEAGPERIVISHARPRSLRVSWAPALGSAAALGYHVQFGPLRGGEAQRVEVPAGRNCTTLQGLAPGTAYLVTVTAAFRSGRESALSAKACTPDGPRPRPRPVPRAPTPGTASREP</sequence>
<accession>Q6PCB0</accession>
<accession>A8K692</accession>
<accession>B3KUA1</accession>
<accession>E9PB53</accession>
<accession>Q7L5D7</accession>
<accession>Q9H6J5</accession>
<organism>
    <name type="scientific">Homo sapiens</name>
    <name type="common">Human</name>
    <dbReference type="NCBI Taxonomy" id="9606"/>
    <lineage>
        <taxon>Eukaryota</taxon>
        <taxon>Metazoa</taxon>
        <taxon>Chordata</taxon>
        <taxon>Craniata</taxon>
        <taxon>Vertebrata</taxon>
        <taxon>Euteleostomi</taxon>
        <taxon>Mammalia</taxon>
        <taxon>Eutheria</taxon>
        <taxon>Euarchontoglires</taxon>
        <taxon>Primates</taxon>
        <taxon>Haplorrhini</taxon>
        <taxon>Catarrhini</taxon>
        <taxon>Hominidae</taxon>
        <taxon>Homo</taxon>
    </lineage>
</organism>
<comment type="function">
    <text evidence="1 11">Promotes matrix assembly (By similarity). Involved in the organization of skeletal muscles and in the formation of neuromuscular junctions (Probable).</text>
</comment>
<comment type="subunit">
    <text evidence="1">Homodimer or homomultimer; disulfide-linked. Interacts with HSPG2.</text>
</comment>
<comment type="subcellular location">
    <subcellularLocation>
        <location evidence="1">Secreted</location>
        <location evidence="1">Extracellular space</location>
        <location evidence="1">Extracellular matrix</location>
        <location evidence="1">Basement membrane</location>
    </subcellularLocation>
</comment>
<comment type="alternative products">
    <event type="alternative splicing"/>
    <isoform>
        <id>Q6PCB0-1</id>
        <name>1</name>
        <sequence type="displayed"/>
    </isoform>
    <isoform>
        <id>Q6PCB0-2</id>
        <name>2</name>
        <sequence type="described" ref="VSP_028617"/>
    </isoform>
    <isoform>
        <id>Q6PCB0-3</id>
        <name>3</name>
        <sequence type="described" ref="VSP_046651 VSP_046652"/>
    </isoform>
</comment>
<comment type="PTM">
    <text evidence="1">N-glycosylated.</text>
</comment>
<comment type="disease" evidence="7 8">
    <disease id="DI-06035">
        <name>Neuronopathy, hereditary motor, autosomal recessive 7</name>
        <acronym>HMNR7</acronym>
        <description>An autosomal recessive, neuromyopathic disorder that manifests in childhood or adulthood with proximal and distal muscle weakness predominantly of the lower limbs. Affected individuals have difficulty climbing stairs and problems standing on the heels. Most patients have foot deformities, and some may have leg muscle atrophy. Muscle biopsy and electrophysiologic studies are consistent with both a myopathic process and an axonal motor neuropathy.</description>
        <dbReference type="MIM" id="619216"/>
    </disease>
    <text>The disease is caused by variants affecting the gene represented in this entry.</text>
</comment>